<evidence type="ECO:0000250" key="1"/>
<evidence type="ECO:0000255" key="2">
    <source>
        <dbReference type="PROSITE-ProRule" id="PRU00176"/>
    </source>
</evidence>
<evidence type="ECO:0000305" key="3"/>
<keyword id="KW-0507">mRNA processing</keyword>
<keyword id="KW-0508">mRNA splicing</keyword>
<keyword id="KW-0539">Nucleus</keyword>
<keyword id="KW-1185">Reference proteome</keyword>
<keyword id="KW-0694">RNA-binding</keyword>
<keyword id="KW-0943">RNA-mediated gene silencing</keyword>
<accession>Q1HE01</accession>
<dbReference type="EMBL" id="DQ497196">
    <property type="protein sequence ID" value="ABF55961.1"/>
    <property type="molecule type" value="mRNA"/>
</dbReference>
<dbReference type="RefSeq" id="NP_001037598.1">
    <property type="nucleotide sequence ID" value="NM_001044133.1"/>
</dbReference>
<dbReference type="SMR" id="Q1HE01"/>
<dbReference type="FunCoup" id="Q1HE01">
    <property type="interactions" value="1760"/>
</dbReference>
<dbReference type="STRING" id="7091.Q1HE01"/>
<dbReference type="PaxDb" id="7091-BGIBMGA007585-TA"/>
<dbReference type="EnsemblMetazoa" id="NM_001044133.1">
    <property type="protein sequence ID" value="NP_001037598.1"/>
    <property type="gene ID" value="GeneID_733050"/>
</dbReference>
<dbReference type="GeneID" id="733050"/>
<dbReference type="KEGG" id="bmor:733050"/>
<dbReference type="CTD" id="42166"/>
<dbReference type="eggNOG" id="KOG0121">
    <property type="taxonomic scope" value="Eukaryota"/>
</dbReference>
<dbReference type="HOGENOM" id="CLU_070952_1_1_1"/>
<dbReference type="InParanoid" id="Q1HE01"/>
<dbReference type="OrthoDB" id="308512at7088"/>
<dbReference type="Proteomes" id="UP000005204">
    <property type="component" value="Unassembled WGS sequence"/>
</dbReference>
<dbReference type="GO" id="GO:0005846">
    <property type="term" value="C:nuclear cap binding complex"/>
    <property type="evidence" value="ECO:0007669"/>
    <property type="project" value="InterPro"/>
</dbReference>
<dbReference type="GO" id="GO:0005634">
    <property type="term" value="C:nucleus"/>
    <property type="evidence" value="ECO:0007669"/>
    <property type="project" value="UniProtKB-SubCell"/>
</dbReference>
<dbReference type="GO" id="GO:0000339">
    <property type="term" value="F:RNA cap binding"/>
    <property type="evidence" value="ECO:0007669"/>
    <property type="project" value="InterPro"/>
</dbReference>
<dbReference type="GO" id="GO:0045292">
    <property type="term" value="P:mRNA cis splicing, via spliceosome"/>
    <property type="evidence" value="ECO:0007669"/>
    <property type="project" value="InterPro"/>
</dbReference>
<dbReference type="GO" id="GO:0031047">
    <property type="term" value="P:regulatory ncRNA-mediated gene silencing"/>
    <property type="evidence" value="ECO:0007669"/>
    <property type="project" value="UniProtKB-KW"/>
</dbReference>
<dbReference type="CDD" id="cd12240">
    <property type="entry name" value="RRM_NCBP2"/>
    <property type="match status" value="1"/>
</dbReference>
<dbReference type="FunFam" id="3.30.70.330:FF:000128">
    <property type="entry name" value="Nuclear cap-binding protein subunit 2"/>
    <property type="match status" value="1"/>
</dbReference>
<dbReference type="Gene3D" id="3.30.70.330">
    <property type="match status" value="1"/>
</dbReference>
<dbReference type="InterPro" id="IPR027157">
    <property type="entry name" value="NCBP2"/>
</dbReference>
<dbReference type="InterPro" id="IPR034148">
    <property type="entry name" value="NCBP2_RRM"/>
</dbReference>
<dbReference type="InterPro" id="IPR012677">
    <property type="entry name" value="Nucleotide-bd_a/b_plait_sf"/>
</dbReference>
<dbReference type="InterPro" id="IPR035979">
    <property type="entry name" value="RBD_domain_sf"/>
</dbReference>
<dbReference type="InterPro" id="IPR000504">
    <property type="entry name" value="RRM_dom"/>
</dbReference>
<dbReference type="PANTHER" id="PTHR18847">
    <property type="entry name" value="20 KD NUCLEAR CAP BINDING PROTEIN"/>
    <property type="match status" value="1"/>
</dbReference>
<dbReference type="PANTHER" id="PTHR18847:SF0">
    <property type="entry name" value="NUCLEAR CAP-BINDING PROTEIN SUBUNIT 2"/>
    <property type="match status" value="1"/>
</dbReference>
<dbReference type="Pfam" id="PF00076">
    <property type="entry name" value="RRM_1"/>
    <property type="match status" value="1"/>
</dbReference>
<dbReference type="SMART" id="SM00360">
    <property type="entry name" value="RRM"/>
    <property type="match status" value="1"/>
</dbReference>
<dbReference type="SUPFAM" id="SSF54928">
    <property type="entry name" value="RNA-binding domain, RBD"/>
    <property type="match status" value="1"/>
</dbReference>
<dbReference type="PROSITE" id="PS50102">
    <property type="entry name" value="RRM"/>
    <property type="match status" value="1"/>
</dbReference>
<organism>
    <name type="scientific">Bombyx mori</name>
    <name type="common">Silk moth</name>
    <dbReference type="NCBI Taxonomy" id="7091"/>
    <lineage>
        <taxon>Eukaryota</taxon>
        <taxon>Metazoa</taxon>
        <taxon>Ecdysozoa</taxon>
        <taxon>Arthropoda</taxon>
        <taxon>Hexapoda</taxon>
        <taxon>Insecta</taxon>
        <taxon>Pterygota</taxon>
        <taxon>Neoptera</taxon>
        <taxon>Endopterygota</taxon>
        <taxon>Lepidoptera</taxon>
        <taxon>Glossata</taxon>
        <taxon>Ditrysia</taxon>
        <taxon>Bombycoidea</taxon>
        <taxon>Bombycidae</taxon>
        <taxon>Bombycinae</taxon>
        <taxon>Bombyx</taxon>
    </lineage>
</organism>
<name>NCBP2_BOMMO</name>
<sequence length="154" mass="17920">MNSSIEISSYRDQHFKGSRSEQEKLLKASSTLYMGNLSFYTTEEQIYELYSRCGDIRRVIMGLDKYKKTPCGFCFVEYYAREDAENCMRYINGTRLDDRIIRCDWDAGFIEGRQYGRGKTGGQVRDEYRTDYDGGRGGYGKIIAQKINPNTLER</sequence>
<comment type="function">
    <text evidence="1">Component of the cap-binding complex (CBC), which binds co-transcriptionally to the 5' cap of pre-mRNAs and is involved in various processes such as pre-mRNA splicing and RNA-mediated gene silencing (RNAi). The CBC complex is involved in miRNA-mediated RNA interference and is required for primary microRNAs (miRNAs) processing. Also involved in innate immunity via the short interfering RNAs (siRNAs) processing machinery by restricting the viral RNA production. In the CBC complex, Cbp20 recognizes and binds capped RNAs (m7GpppG-capped RNA) but requires Cbp80 to stabilize the movement of its N-terminal loop and lock the CBC into a high affinity cap-binding state with the cap structure (By similarity).</text>
</comment>
<comment type="subunit">
    <text evidence="1">Component of the nuclear cap-binding complex (CBC), a heterodimer composed of Cbp80 and Cbp20 that interacts with m7GpppG-capped RNA.</text>
</comment>
<comment type="subcellular location">
    <subcellularLocation>
        <location evidence="1">Nucleus</location>
    </subcellularLocation>
</comment>
<comment type="similarity">
    <text evidence="3">Belongs to the RRM NCBP2 family.</text>
</comment>
<proteinExistence type="evidence at transcript level"/>
<protein>
    <recommendedName>
        <fullName>Nuclear cap-binding protein subunit 2</fullName>
    </recommendedName>
    <alternativeName>
        <fullName>20 kDa nuclear cap-binding protein</fullName>
    </alternativeName>
    <alternativeName>
        <fullName>NCBP 20 kDa subunit</fullName>
        <shortName>CBP20</shortName>
    </alternativeName>
</protein>
<reference key="1">
    <citation type="submission" date="2006-04" db="EMBL/GenBank/DDBJ databases">
        <title>RNA binding proteins in Bombyx mori.</title>
        <authorList>
            <person name="Wang L.-L."/>
            <person name="Chen K.-P."/>
            <person name="Yao Q."/>
            <person name="Hu Z.-G."/>
            <person name="Gao G.-T."/>
        </authorList>
    </citation>
    <scope>NUCLEOTIDE SEQUENCE [MRNA]</scope>
</reference>
<feature type="chain" id="PRO_0000385260" description="Nuclear cap-binding protein subunit 2">
    <location>
        <begin position="1"/>
        <end position="154"/>
    </location>
</feature>
<feature type="domain" description="RRM" evidence="2">
    <location>
        <begin position="30"/>
        <end position="108"/>
    </location>
</feature>
<feature type="binding site" evidence="1">
    <location>
        <position position="10"/>
    </location>
    <ligand>
        <name>mRNA</name>
        <dbReference type="ChEBI" id="CHEBI:33699"/>
    </ligand>
    <ligandPart>
        <name>mRNA cap</name>
    </ligandPart>
</feature>
<feature type="binding site" evidence="1">
    <location>
        <position position="33"/>
    </location>
    <ligand>
        <name>mRNA</name>
        <dbReference type="ChEBI" id="CHEBI:33699"/>
    </ligand>
    <ligandPart>
        <name>mRNA cap</name>
    </ligandPart>
</feature>
<feature type="binding site" evidence="1">
    <location>
        <begin position="102"/>
        <end position="106"/>
    </location>
    <ligand>
        <name>mRNA</name>
        <dbReference type="ChEBI" id="CHEBI:33699"/>
    </ligand>
    <ligandPart>
        <name>mRNA cap</name>
    </ligandPart>
</feature>
<feature type="binding site" evidence="1">
    <location>
        <begin position="113"/>
        <end position="117"/>
    </location>
    <ligand>
        <name>mRNA</name>
        <dbReference type="ChEBI" id="CHEBI:33699"/>
    </ligand>
    <ligandPart>
        <name>mRNA cap</name>
    </ligandPart>
</feature>
<feature type="binding site" evidence="1">
    <location>
        <begin position="123"/>
        <end position="124"/>
    </location>
    <ligand>
        <name>mRNA</name>
        <dbReference type="ChEBI" id="CHEBI:33699"/>
    </ligand>
    <ligandPart>
        <name>mRNA cap</name>
    </ligandPart>
</feature>